<evidence type="ECO:0000255" key="1">
    <source>
        <dbReference type="HAMAP-Rule" id="MF_00076"/>
    </source>
</evidence>
<proteinExistence type="inferred from homology"/>
<reference key="1">
    <citation type="submission" date="2008-01" db="EMBL/GenBank/DDBJ databases">
        <title>Complete sequence of chromosome of Caulobacter sp. K31.</title>
        <authorList>
            <consortium name="US DOE Joint Genome Institute"/>
            <person name="Copeland A."/>
            <person name="Lucas S."/>
            <person name="Lapidus A."/>
            <person name="Barry K."/>
            <person name="Glavina del Rio T."/>
            <person name="Dalin E."/>
            <person name="Tice H."/>
            <person name="Pitluck S."/>
            <person name="Bruce D."/>
            <person name="Goodwin L."/>
            <person name="Thompson L.S."/>
            <person name="Brettin T."/>
            <person name="Detter J.C."/>
            <person name="Han C."/>
            <person name="Schmutz J."/>
            <person name="Larimer F."/>
            <person name="Land M."/>
            <person name="Hauser L."/>
            <person name="Kyrpides N."/>
            <person name="Kim E."/>
            <person name="Stephens C."/>
            <person name="Richardson P."/>
        </authorList>
    </citation>
    <scope>NUCLEOTIDE SEQUENCE [LARGE SCALE GENOMIC DNA]</scope>
    <source>
        <strain>K31</strain>
    </source>
</reference>
<name>HIS7_CAUSK</name>
<protein>
    <recommendedName>
        <fullName evidence="1">Imidazoleglycerol-phosphate dehydratase</fullName>
        <shortName evidence="1">IGPD</shortName>
        <ecNumber evidence="1">4.2.1.19</ecNumber>
    </recommendedName>
</protein>
<feature type="chain" id="PRO_1000075241" description="Imidazoleglycerol-phosphate dehydratase">
    <location>
        <begin position="1"/>
        <end position="196"/>
    </location>
</feature>
<sequence length="196" mass="21804">MARTAEVVRETKETQIRVWIDLDGTGASTISTGIGFYDHMLESFARHGGFDLKVETKGDLHIDMHHTVEDTGIVLGQAIKEALDGFKGVRRFGHAYIPMDETLTRCAIDLSNRPYLIWKVDFKRPKVGEMDTELFKEFHHAFAMNVGACVHLETLYGDNTHHVAESGFKALARALRQAVEIDPKTGGHAPSTKGVL</sequence>
<comment type="catalytic activity">
    <reaction evidence="1">
        <text>D-erythro-1-(imidazol-4-yl)glycerol 3-phosphate = 3-(imidazol-4-yl)-2-oxopropyl phosphate + H2O</text>
        <dbReference type="Rhea" id="RHEA:11040"/>
        <dbReference type="ChEBI" id="CHEBI:15377"/>
        <dbReference type="ChEBI" id="CHEBI:57766"/>
        <dbReference type="ChEBI" id="CHEBI:58278"/>
        <dbReference type="EC" id="4.2.1.19"/>
    </reaction>
</comment>
<comment type="pathway">
    <text evidence="1">Amino-acid biosynthesis; L-histidine biosynthesis; L-histidine from 5-phospho-alpha-D-ribose 1-diphosphate: step 6/9.</text>
</comment>
<comment type="subcellular location">
    <subcellularLocation>
        <location evidence="1">Cytoplasm</location>
    </subcellularLocation>
</comment>
<comment type="similarity">
    <text evidence="1">Belongs to the imidazoleglycerol-phosphate dehydratase family.</text>
</comment>
<gene>
    <name evidence="1" type="primary">hisB</name>
    <name type="ordered locus">Caul_5045</name>
</gene>
<organism>
    <name type="scientific">Caulobacter sp. (strain K31)</name>
    <dbReference type="NCBI Taxonomy" id="366602"/>
    <lineage>
        <taxon>Bacteria</taxon>
        <taxon>Pseudomonadati</taxon>
        <taxon>Pseudomonadota</taxon>
        <taxon>Alphaproteobacteria</taxon>
        <taxon>Caulobacterales</taxon>
        <taxon>Caulobacteraceae</taxon>
        <taxon>Caulobacter</taxon>
    </lineage>
</organism>
<dbReference type="EC" id="4.2.1.19" evidence="1"/>
<dbReference type="EMBL" id="CP000927">
    <property type="protein sequence ID" value="ABZ74165.1"/>
    <property type="molecule type" value="Genomic_DNA"/>
</dbReference>
<dbReference type="SMR" id="B0T7A1"/>
<dbReference type="STRING" id="366602.Caul_5045"/>
<dbReference type="KEGG" id="cak:Caul_5045"/>
<dbReference type="eggNOG" id="COG0131">
    <property type="taxonomic scope" value="Bacteria"/>
</dbReference>
<dbReference type="HOGENOM" id="CLU_044308_2_0_5"/>
<dbReference type="OrthoDB" id="9813612at2"/>
<dbReference type="UniPathway" id="UPA00031">
    <property type="reaction ID" value="UER00011"/>
</dbReference>
<dbReference type="GO" id="GO:0005737">
    <property type="term" value="C:cytoplasm"/>
    <property type="evidence" value="ECO:0007669"/>
    <property type="project" value="UniProtKB-SubCell"/>
</dbReference>
<dbReference type="GO" id="GO:0004424">
    <property type="term" value="F:imidazoleglycerol-phosphate dehydratase activity"/>
    <property type="evidence" value="ECO:0007669"/>
    <property type="project" value="UniProtKB-UniRule"/>
</dbReference>
<dbReference type="GO" id="GO:0000105">
    <property type="term" value="P:L-histidine biosynthetic process"/>
    <property type="evidence" value="ECO:0007669"/>
    <property type="project" value="UniProtKB-UniRule"/>
</dbReference>
<dbReference type="CDD" id="cd07914">
    <property type="entry name" value="IGPD"/>
    <property type="match status" value="1"/>
</dbReference>
<dbReference type="FunFam" id="3.30.230.40:FF:000001">
    <property type="entry name" value="Imidazoleglycerol-phosphate dehydratase HisB"/>
    <property type="match status" value="1"/>
</dbReference>
<dbReference type="FunFam" id="3.30.230.40:FF:000003">
    <property type="entry name" value="Imidazoleglycerol-phosphate dehydratase HisB"/>
    <property type="match status" value="1"/>
</dbReference>
<dbReference type="Gene3D" id="3.30.230.40">
    <property type="entry name" value="Imidazole glycerol phosphate dehydratase, domain 1"/>
    <property type="match status" value="2"/>
</dbReference>
<dbReference type="HAMAP" id="MF_00076">
    <property type="entry name" value="HisB"/>
    <property type="match status" value="1"/>
</dbReference>
<dbReference type="InterPro" id="IPR038494">
    <property type="entry name" value="IGPD_sf"/>
</dbReference>
<dbReference type="InterPro" id="IPR000807">
    <property type="entry name" value="ImidazoleglycerolP_deHydtase"/>
</dbReference>
<dbReference type="InterPro" id="IPR020565">
    <property type="entry name" value="ImidazoleglycerP_deHydtase_CS"/>
</dbReference>
<dbReference type="InterPro" id="IPR020568">
    <property type="entry name" value="Ribosomal_Su5_D2-typ_SF"/>
</dbReference>
<dbReference type="NCBIfam" id="NF002109">
    <property type="entry name" value="PRK00951.1-5"/>
    <property type="match status" value="1"/>
</dbReference>
<dbReference type="NCBIfam" id="NF002111">
    <property type="entry name" value="PRK00951.2-1"/>
    <property type="match status" value="1"/>
</dbReference>
<dbReference type="NCBIfam" id="NF002114">
    <property type="entry name" value="PRK00951.2-4"/>
    <property type="match status" value="1"/>
</dbReference>
<dbReference type="PANTHER" id="PTHR23133:SF2">
    <property type="entry name" value="IMIDAZOLEGLYCEROL-PHOSPHATE DEHYDRATASE"/>
    <property type="match status" value="1"/>
</dbReference>
<dbReference type="PANTHER" id="PTHR23133">
    <property type="entry name" value="IMIDAZOLEGLYCEROL-PHOSPHATE DEHYDRATASE HIS7"/>
    <property type="match status" value="1"/>
</dbReference>
<dbReference type="Pfam" id="PF00475">
    <property type="entry name" value="IGPD"/>
    <property type="match status" value="1"/>
</dbReference>
<dbReference type="SUPFAM" id="SSF54211">
    <property type="entry name" value="Ribosomal protein S5 domain 2-like"/>
    <property type="match status" value="2"/>
</dbReference>
<dbReference type="PROSITE" id="PS00954">
    <property type="entry name" value="IGP_DEHYDRATASE_1"/>
    <property type="match status" value="1"/>
</dbReference>
<dbReference type="PROSITE" id="PS00955">
    <property type="entry name" value="IGP_DEHYDRATASE_2"/>
    <property type="match status" value="1"/>
</dbReference>
<accession>B0T7A1</accession>
<keyword id="KW-0028">Amino-acid biosynthesis</keyword>
<keyword id="KW-0963">Cytoplasm</keyword>
<keyword id="KW-0368">Histidine biosynthesis</keyword>
<keyword id="KW-0456">Lyase</keyword>